<name>FDFT_RAT</name>
<organism>
    <name type="scientific">Rattus norvegicus</name>
    <name type="common">Rat</name>
    <dbReference type="NCBI Taxonomy" id="10116"/>
    <lineage>
        <taxon>Eukaryota</taxon>
        <taxon>Metazoa</taxon>
        <taxon>Chordata</taxon>
        <taxon>Craniata</taxon>
        <taxon>Vertebrata</taxon>
        <taxon>Euteleostomi</taxon>
        <taxon>Mammalia</taxon>
        <taxon>Eutheria</taxon>
        <taxon>Euarchontoglires</taxon>
        <taxon>Glires</taxon>
        <taxon>Rodentia</taxon>
        <taxon>Myomorpha</taxon>
        <taxon>Muroidea</taxon>
        <taxon>Muridae</taxon>
        <taxon>Murinae</taxon>
        <taxon>Rattus</taxon>
    </lineage>
</organism>
<comment type="function">
    <text evidence="1 5">Catalyzes the condensation of 2 farnesyl pyrophosphate (FPP) moieties to form squalene (PubMed:9575210). Proceeds in two distinct steps. In the first half-reaction, two molecules of FPP react to form the stable presqualene diphosphate intermediate (PSQPP), with concomitant release of a proton and a molecule of inorganic diphosphate. In the second half-reaction, PSQPP undergoes heterolysis, isomerization, and reduction with NADPH or NADH to form squalene. It is the first committed enzyme of the sterol biosynthesis pathway (By similarity).</text>
</comment>
<comment type="catalytic activity">
    <reaction evidence="5">
        <text>2 (2E,6E)-farnesyl diphosphate + NADPH + H(+) = squalene + 2 diphosphate + NADP(+)</text>
        <dbReference type="Rhea" id="RHEA:32295"/>
        <dbReference type="ChEBI" id="CHEBI:15378"/>
        <dbReference type="ChEBI" id="CHEBI:15440"/>
        <dbReference type="ChEBI" id="CHEBI:33019"/>
        <dbReference type="ChEBI" id="CHEBI:57783"/>
        <dbReference type="ChEBI" id="CHEBI:58349"/>
        <dbReference type="ChEBI" id="CHEBI:175763"/>
        <dbReference type="EC" id="2.5.1.21"/>
    </reaction>
    <physiologicalReaction direction="left-to-right" evidence="5">
        <dbReference type="Rhea" id="RHEA:32296"/>
    </physiologicalReaction>
</comment>
<comment type="catalytic activity">
    <reaction evidence="1">
        <text>2 (2E,6E)-farnesyl diphosphate + NADH + H(+) = squalene + 2 diphosphate + NAD(+)</text>
        <dbReference type="Rhea" id="RHEA:32299"/>
        <dbReference type="ChEBI" id="CHEBI:15378"/>
        <dbReference type="ChEBI" id="CHEBI:15440"/>
        <dbReference type="ChEBI" id="CHEBI:33019"/>
        <dbReference type="ChEBI" id="CHEBI:57540"/>
        <dbReference type="ChEBI" id="CHEBI:57945"/>
        <dbReference type="ChEBI" id="CHEBI:175763"/>
        <dbReference type="EC" id="2.5.1.21"/>
    </reaction>
    <physiologicalReaction direction="left-to-right" evidence="1">
        <dbReference type="Rhea" id="RHEA:32300"/>
    </physiologicalReaction>
</comment>
<comment type="catalytic activity">
    <reaction evidence="1">
        <text>presqualene diphosphate + NADH + H(+) = squalene + diphosphate + NAD(+)</text>
        <dbReference type="Rhea" id="RHEA:22228"/>
        <dbReference type="ChEBI" id="CHEBI:15378"/>
        <dbReference type="ChEBI" id="CHEBI:15440"/>
        <dbReference type="ChEBI" id="CHEBI:33019"/>
        <dbReference type="ChEBI" id="CHEBI:57310"/>
        <dbReference type="ChEBI" id="CHEBI:57540"/>
        <dbReference type="ChEBI" id="CHEBI:57945"/>
    </reaction>
    <physiologicalReaction direction="left-to-right" evidence="1">
        <dbReference type="Rhea" id="RHEA:22229"/>
    </physiologicalReaction>
</comment>
<comment type="catalytic activity">
    <reaction evidence="5">
        <text>presqualene diphosphate + NADPH + H(+) = squalene + diphosphate + NADP(+)</text>
        <dbReference type="Rhea" id="RHEA:22232"/>
        <dbReference type="ChEBI" id="CHEBI:15378"/>
        <dbReference type="ChEBI" id="CHEBI:15440"/>
        <dbReference type="ChEBI" id="CHEBI:33019"/>
        <dbReference type="ChEBI" id="CHEBI:57310"/>
        <dbReference type="ChEBI" id="CHEBI:57783"/>
        <dbReference type="ChEBI" id="CHEBI:58349"/>
    </reaction>
    <physiologicalReaction direction="left-to-right" evidence="5">
        <dbReference type="Rhea" id="RHEA:22233"/>
    </physiologicalReaction>
</comment>
<comment type="catalytic activity">
    <reaction evidence="1">
        <text>2 (2E,6E)-farnesyl diphosphate = presqualene diphosphate + diphosphate</text>
        <dbReference type="Rhea" id="RHEA:22672"/>
        <dbReference type="ChEBI" id="CHEBI:33019"/>
        <dbReference type="ChEBI" id="CHEBI:57310"/>
        <dbReference type="ChEBI" id="CHEBI:175763"/>
    </reaction>
    <physiologicalReaction direction="left-to-right" evidence="1">
        <dbReference type="Rhea" id="RHEA:22673"/>
    </physiologicalReaction>
</comment>
<comment type="cofactor">
    <cofactor evidence="1">
        <name>Mg(2+)</name>
        <dbReference type="ChEBI" id="CHEBI:18420"/>
    </cofactor>
</comment>
<comment type="pathway">
    <text evidence="6">Terpene metabolism; lanosterol biosynthesis; lanosterol from farnesyl diphosphate: step 1/3.</text>
</comment>
<comment type="subcellular location">
    <subcellularLocation>
        <location evidence="4">Endoplasmic reticulum membrane</location>
        <topology evidence="2">Multi-pass membrane protein</topology>
    </subcellularLocation>
</comment>
<comment type="disease">
    <text evidence="3">Defects in Lss and Fdft1 are the cause of Shumiya cataract rat (SCR). This strain develop mature cataracts at around 11 weeks of age, exhibiting opacity from the perinuclear zone to the cortical intermediate layer. Cholesterol levels in cataractous lenses decreased to about 57% of normal. Cholesterol insufficiency may cause the deficient proliferation of lens epithelial cells in Shumiya cataract rats, resulting in the loss of homeostatic epithelial cell control of the underlying fiber cells and ultimately cataractogenesis.</text>
</comment>
<comment type="similarity">
    <text evidence="6">Belongs to the phytoene/squalene synthase family.</text>
</comment>
<feature type="chain" id="PRO_0000067445" description="Squalene synthase">
    <location>
        <begin position="1"/>
        <end position="416"/>
    </location>
</feature>
<feature type="transmembrane region" description="Helical" evidence="2">
    <location>
        <begin position="284"/>
        <end position="304"/>
    </location>
</feature>
<feature type="transmembrane region" description="Helical" evidence="2">
    <location>
        <begin position="384"/>
        <end position="404"/>
    </location>
</feature>
<feature type="binding site" evidence="1">
    <location>
        <position position="52"/>
    </location>
    <ligand>
        <name>NADP(+)</name>
        <dbReference type="ChEBI" id="CHEBI:58349"/>
    </ligand>
</feature>
<feature type="binding site" evidence="1">
    <location>
        <position position="77"/>
    </location>
    <ligand>
        <name>NADP(+)</name>
        <dbReference type="ChEBI" id="CHEBI:58349"/>
    </ligand>
</feature>
<feature type="binding site" evidence="1">
    <location>
        <position position="80"/>
    </location>
    <ligand>
        <name>Mg(2+)</name>
        <dbReference type="ChEBI" id="CHEBI:18420"/>
    </ligand>
</feature>
<feature type="binding site" evidence="1">
    <location>
        <position position="83"/>
    </location>
    <ligand>
        <name>Mg(2+)</name>
        <dbReference type="ChEBI" id="CHEBI:18420"/>
    </ligand>
</feature>
<feature type="binding site" evidence="1">
    <location>
        <position position="84"/>
    </location>
    <ligand>
        <name>Mg(2+)</name>
        <dbReference type="ChEBI" id="CHEBI:18420"/>
    </ligand>
</feature>
<feature type="binding site" evidence="1">
    <location>
        <position position="218"/>
    </location>
    <ligand>
        <name>NADP(+)</name>
        <dbReference type="ChEBI" id="CHEBI:58349"/>
    </ligand>
</feature>
<feature type="binding site" evidence="1">
    <location>
        <position position="315"/>
    </location>
    <ligand>
        <name>NADP(+)</name>
        <dbReference type="ChEBI" id="CHEBI:58349"/>
    </ligand>
</feature>
<feature type="binding site" evidence="1">
    <location>
        <position position="317"/>
    </location>
    <ligand>
        <name>NADP(+)</name>
        <dbReference type="ChEBI" id="CHEBI:58349"/>
    </ligand>
</feature>
<feature type="mutagenesis site" description="Completely abolishes formation of PSPP or squalene from FPP." evidence="5">
    <original>Y</original>
    <variation>F</variation>
    <variation>S</variation>
    <variation>W</variation>
    <location>
        <position position="171"/>
    </location>
</feature>
<feature type="mutagenesis site" description="Has little effect on the total squalene synthase activity." evidence="5">
    <original>Y</original>
    <variation>F</variation>
    <variation>S</variation>
    <variation>W</variation>
    <location>
        <position position="174"/>
    </location>
</feature>
<feature type="mutagenesis site" description="Does not affect squalene synthase activity." evidence="5">
    <original>R</original>
    <variation>G</variation>
    <location>
        <position position="185"/>
    </location>
</feature>
<feature type="mutagenesis site" description="Retains partial activity of the first reaction. Retains partial activity of the second reaction." evidence="5">
    <original>Q</original>
    <variation>E</variation>
    <variation>N</variation>
    <location>
        <position position="283"/>
    </location>
</feature>
<feature type="mutagenesis site" description="Completely eliminates the activities of both the first and the second reactions." evidence="5">
    <original>F</original>
    <variation>D</variation>
    <variation>R</variation>
    <location>
        <position position="286"/>
    </location>
</feature>
<feature type="mutagenesis site" description="Retains partial activity of the first reaction. Retains partial activity of the second reaction." evidence="5">
    <original>F</original>
    <variation>Y</variation>
    <variation>W</variation>
    <variation>L</variation>
    <location>
        <position position="286"/>
    </location>
</feature>
<feature type="mutagenesis site" description="Completely eliminates the activities of both the first and the second reactions." evidence="5">
    <original>F</original>
    <variation>D</variation>
    <variation>R</variation>
    <location>
        <position position="288"/>
    </location>
</feature>
<feature type="mutagenesis site" description="Retains partial activity of the first reaction. Completely eliminates the activity of the second reaction." evidence="5">
    <original>F</original>
    <variation>L</variation>
    <location>
        <position position="288"/>
    </location>
</feature>
<feature type="mutagenesis site" description="Retains partial activity of the first reaction. Retains partial activity of the second reaction." evidence="5">
    <original>F</original>
    <variation>Y</variation>
    <variation>W</variation>
    <variation>L</variation>
    <location>
        <position position="288"/>
    </location>
</feature>
<feature type="mutagenesis site" description="Retains partial activity of the first reaction. Retains partial activity of the second reaction." evidence="5">
    <original>Q</original>
    <variation>N</variation>
    <variation>E</variation>
    <location>
        <position position="293"/>
    </location>
</feature>
<proteinExistence type="evidence at protein level"/>
<reference key="1">
    <citation type="journal article" date="1992" name="J. Biol. Chem.">
        <title>Solubilization, purification, and characterization of a truncated form of rat hepatic squalene synthetase.</title>
        <authorList>
            <person name="Shechter I."/>
            <person name="Klinger E."/>
            <person name="Rucker M.L."/>
            <person name="Engstrom R.G."/>
            <person name="Spirito J.A."/>
            <person name="Islam M.A."/>
            <person name="Boettcher B.R."/>
            <person name="Wienstein D.B."/>
        </authorList>
    </citation>
    <scope>NUCLEOTIDE SEQUENCE [MRNA]</scope>
</reference>
<reference key="2">
    <citation type="journal article" date="1992" name="J. Biol. Chem.">
        <title>Molecular cloning, expression, and characterization of the cDNA for the rat hepatic squalene synthase.</title>
        <authorList>
            <person name="McKenzie T.L."/>
            <person name="Jiang G."/>
            <person name="Straubhaar J.R."/>
            <person name="Conrad D.G."/>
            <person name="Shechter I."/>
        </authorList>
    </citation>
    <scope>NUCLEOTIDE SEQUENCE [MRNA]</scope>
    <scope>CATALYTIC ACTIVITY</scope>
    <scope>FUNCTION</scope>
</reference>
<reference key="3">
    <citation type="journal article" date="2004" name="Genome Res.">
        <title>The status, quality, and expansion of the NIH full-length cDNA project: the Mammalian Gene Collection (MGC).</title>
        <authorList>
            <consortium name="The MGC Project Team"/>
        </authorList>
    </citation>
    <scope>NUCLEOTIDE SEQUENCE [LARGE SCALE MRNA]</scope>
    <source>
        <tissue>Heart</tissue>
    </source>
</reference>
<reference key="4">
    <citation type="journal article" date="1993" name="J. Biol. Chem.">
        <title>Subcellular localization of squalene synthase in rat hepatic cells. Biochemical and immunochemical evidence.</title>
        <authorList>
            <person name="Stamellos K.D."/>
            <person name="Shackelford J.E."/>
            <person name="Schechter I."/>
            <person name="Jiang G."/>
            <person name="Conrad D.G."/>
            <person name="Keller G.-A."/>
            <person name="Krisans S.K."/>
        </authorList>
    </citation>
    <scope>SUBCELLULAR LOCATION</scope>
    <source>
        <tissue>Liver</tissue>
    </source>
</reference>
<reference key="5">
    <citation type="journal article" date="1998" name="J. Biol. Chem.">
        <title>Function-structure studies and identification of three enzyme domains involved in the catalytic activity in rat hepatic squalene synthase.</title>
        <authorList>
            <person name="Gu P."/>
            <person name="Ishii Y."/>
            <person name="Spencer T.A."/>
            <person name="Shechter I."/>
        </authorList>
    </citation>
    <scope>CATALYTIC ACTIVITY</scope>
    <scope>FUNCTION</scope>
    <scope>MUTAGENESIS OF TYR-171; TYR-174; ARG-185; GLN-283; PHE-286; PHE-288 AND GLN-293</scope>
</reference>
<reference key="6">
    <citation type="journal article" date="2006" name="J. Clin. Invest.">
        <title>Lanosterol synthase mutations cause cholesterol deficiency-associated cataracts in the Shumiya cataract rat.</title>
        <authorList>
            <person name="Mori M."/>
            <person name="Li G."/>
            <person name="Abe I."/>
            <person name="Nakayama J."/>
            <person name="Guo Z."/>
            <person name="Sawashita J."/>
            <person name="Ugawa T."/>
            <person name="Nishizono S."/>
            <person name="Serikawa T."/>
            <person name="Higuchi K."/>
            <person name="Shumiya S."/>
        </authorList>
    </citation>
    <scope>DISEASE</scope>
</reference>
<keyword id="KW-0152">Cholesterol biosynthesis</keyword>
<keyword id="KW-0153">Cholesterol metabolism</keyword>
<keyword id="KW-0225">Disease variant</keyword>
<keyword id="KW-0256">Endoplasmic reticulum</keyword>
<keyword id="KW-0414">Isoprene biosynthesis</keyword>
<keyword id="KW-0444">Lipid biosynthesis</keyword>
<keyword id="KW-0443">Lipid metabolism</keyword>
<keyword id="KW-0460">Magnesium</keyword>
<keyword id="KW-0472">Membrane</keyword>
<keyword id="KW-0479">Metal-binding</keyword>
<keyword id="KW-0511">Multifunctional enzyme</keyword>
<keyword id="KW-0520">NAD</keyword>
<keyword id="KW-0521">NADP</keyword>
<keyword id="KW-1185">Reference proteome</keyword>
<keyword id="KW-0752">Steroid biosynthesis</keyword>
<keyword id="KW-0753">Steroid metabolism</keyword>
<keyword id="KW-0756">Sterol biosynthesis</keyword>
<keyword id="KW-1207">Sterol metabolism</keyword>
<keyword id="KW-0808">Transferase</keyword>
<keyword id="KW-0812">Transmembrane</keyword>
<keyword id="KW-1133">Transmembrane helix</keyword>
<dbReference type="EC" id="2.5.1.21" evidence="5"/>
<dbReference type="EMBL" id="M95591">
    <property type="protein sequence ID" value="AAA42179.1"/>
    <property type="molecule type" value="mRNA"/>
</dbReference>
<dbReference type="EMBL" id="BC081810">
    <property type="protein sequence ID" value="AAH81810.1"/>
    <property type="molecule type" value="mRNA"/>
</dbReference>
<dbReference type="PIR" id="A45105">
    <property type="entry name" value="A45105"/>
</dbReference>
<dbReference type="RefSeq" id="NP_062111.1">
    <property type="nucleotide sequence ID" value="NM_019238.2"/>
</dbReference>
<dbReference type="SMR" id="Q02769"/>
<dbReference type="FunCoup" id="Q02769">
    <property type="interactions" value="580"/>
</dbReference>
<dbReference type="STRING" id="10116.ENSRNOP00000029808"/>
<dbReference type="BindingDB" id="Q02769"/>
<dbReference type="ChEMBL" id="CHEMBL3815"/>
<dbReference type="DrugCentral" id="Q02769"/>
<dbReference type="GuidetoPHARMACOLOGY" id="645"/>
<dbReference type="PhosphoSitePlus" id="Q02769"/>
<dbReference type="jPOST" id="Q02769"/>
<dbReference type="PaxDb" id="10116-ENSRNOP00000029808"/>
<dbReference type="Ensembl" id="ENSRNOT00000032089.5">
    <property type="protein sequence ID" value="ENSRNOP00000029808.3"/>
    <property type="gene ID" value="ENSRNOG00000021314.5"/>
</dbReference>
<dbReference type="GeneID" id="29580"/>
<dbReference type="KEGG" id="rno:29580"/>
<dbReference type="UCSC" id="RGD:61834">
    <property type="organism name" value="rat"/>
</dbReference>
<dbReference type="AGR" id="RGD:61834"/>
<dbReference type="CTD" id="2222"/>
<dbReference type="RGD" id="61834">
    <property type="gene designation" value="Fdft1"/>
</dbReference>
<dbReference type="eggNOG" id="KOG1459">
    <property type="taxonomic scope" value="Eukaryota"/>
</dbReference>
<dbReference type="GeneTree" id="ENSGT00390000016034"/>
<dbReference type="HOGENOM" id="CLU_031981_0_2_1"/>
<dbReference type="InParanoid" id="Q02769"/>
<dbReference type="OrthoDB" id="24463at9989"/>
<dbReference type="PhylomeDB" id="Q02769"/>
<dbReference type="TreeFam" id="TF105316"/>
<dbReference type="BRENDA" id="2.5.1.21">
    <property type="organism ID" value="5301"/>
</dbReference>
<dbReference type="Reactome" id="R-RNO-191273">
    <property type="pathway name" value="Cholesterol biosynthesis"/>
</dbReference>
<dbReference type="UniPathway" id="UPA00767">
    <property type="reaction ID" value="UER00751"/>
</dbReference>
<dbReference type="PRO" id="PR:Q02769"/>
<dbReference type="Proteomes" id="UP000002494">
    <property type="component" value="Chromosome 15"/>
</dbReference>
<dbReference type="Bgee" id="ENSRNOG00000021314">
    <property type="expression patterns" value="Expressed in liver and 20 other cell types or tissues"/>
</dbReference>
<dbReference type="GO" id="GO:0005789">
    <property type="term" value="C:endoplasmic reticulum membrane"/>
    <property type="evidence" value="ECO:0000314"/>
    <property type="project" value="UniProtKB"/>
</dbReference>
<dbReference type="GO" id="GO:0046872">
    <property type="term" value="F:metal ion binding"/>
    <property type="evidence" value="ECO:0007669"/>
    <property type="project" value="UniProtKB-KW"/>
</dbReference>
<dbReference type="GO" id="GO:0051996">
    <property type="term" value="F:squalene synthase [NAD(P)H] activity"/>
    <property type="evidence" value="ECO:0000318"/>
    <property type="project" value="GO_Central"/>
</dbReference>
<dbReference type="GO" id="GO:0006695">
    <property type="term" value="P:cholesterol biosynthetic process"/>
    <property type="evidence" value="ECO:0000315"/>
    <property type="project" value="RGD"/>
</dbReference>
<dbReference type="GO" id="GO:0045338">
    <property type="term" value="P:farnesyl diphosphate metabolic process"/>
    <property type="evidence" value="ECO:0000315"/>
    <property type="project" value="RGD"/>
</dbReference>
<dbReference type="GO" id="GO:0008299">
    <property type="term" value="P:isoprenoid biosynthetic process"/>
    <property type="evidence" value="ECO:0007669"/>
    <property type="project" value="UniProtKB-KW"/>
</dbReference>
<dbReference type="CDD" id="cd00683">
    <property type="entry name" value="Trans_IPPS_HH"/>
    <property type="match status" value="1"/>
</dbReference>
<dbReference type="FunFam" id="1.10.600.10:FF:000053">
    <property type="entry name" value="Squalene synthase"/>
    <property type="match status" value="1"/>
</dbReference>
<dbReference type="Gene3D" id="1.10.600.10">
    <property type="entry name" value="Farnesyl Diphosphate Synthase"/>
    <property type="match status" value="1"/>
</dbReference>
<dbReference type="InterPro" id="IPR008949">
    <property type="entry name" value="Isoprenoid_synthase_dom_sf"/>
</dbReference>
<dbReference type="InterPro" id="IPR002060">
    <property type="entry name" value="Squ/phyt_synthse"/>
</dbReference>
<dbReference type="InterPro" id="IPR006449">
    <property type="entry name" value="Squal_synth-like"/>
</dbReference>
<dbReference type="InterPro" id="IPR019845">
    <property type="entry name" value="Squalene/phytoene_synthase_CS"/>
</dbReference>
<dbReference type="InterPro" id="IPR044844">
    <property type="entry name" value="Trans_IPPS_euk-type"/>
</dbReference>
<dbReference type="InterPro" id="IPR033904">
    <property type="entry name" value="Trans_IPPS_HH"/>
</dbReference>
<dbReference type="NCBIfam" id="TIGR01559">
    <property type="entry name" value="squal_synth"/>
    <property type="match status" value="1"/>
</dbReference>
<dbReference type="PANTHER" id="PTHR11626">
    <property type="entry name" value="FARNESYL-DIPHOSPHATE FARNESYLTRANSFERASE"/>
    <property type="match status" value="1"/>
</dbReference>
<dbReference type="PANTHER" id="PTHR11626:SF2">
    <property type="entry name" value="SQUALENE SYNTHASE"/>
    <property type="match status" value="1"/>
</dbReference>
<dbReference type="Pfam" id="PF00494">
    <property type="entry name" value="SQS_PSY"/>
    <property type="match status" value="1"/>
</dbReference>
<dbReference type="SFLD" id="SFLDS00005">
    <property type="entry name" value="Isoprenoid_Synthase_Type_I"/>
    <property type="match status" value="1"/>
</dbReference>
<dbReference type="SFLD" id="SFLDG01018">
    <property type="entry name" value="Squalene/Phytoene_Synthase_Lik"/>
    <property type="match status" value="1"/>
</dbReference>
<dbReference type="SUPFAM" id="SSF48576">
    <property type="entry name" value="Terpenoid synthases"/>
    <property type="match status" value="1"/>
</dbReference>
<dbReference type="PROSITE" id="PS01044">
    <property type="entry name" value="SQUALEN_PHYTOEN_SYN_1"/>
    <property type="match status" value="1"/>
</dbReference>
<dbReference type="PROSITE" id="PS01045">
    <property type="entry name" value="SQUALEN_PHYTOEN_SYN_2"/>
    <property type="match status" value="1"/>
</dbReference>
<protein>
    <recommendedName>
        <fullName>Squalene synthase</fullName>
        <shortName>SQS</shortName>
        <shortName>SS</shortName>
        <ecNumber evidence="5">2.5.1.21</ecNumber>
    </recommendedName>
    <alternativeName>
        <fullName>FPP:FPP farnesyltransferase</fullName>
    </alternativeName>
    <alternativeName>
        <fullName>Farnesyl-diphosphate farnesyltransferase</fullName>
    </alternativeName>
</protein>
<gene>
    <name type="primary">Fdft1</name>
</gene>
<accession>Q02769</accession>
<sequence length="416" mass="48106">MEFVKCLGHPEEFYNLLRFRMGGRRNFIPKMDRNSLSNSLKTCYKYLDQTSRSFAAVIQALDGDIRHAVCVFYLILRAMDTVEDDMAISVEKKIPLLRNFHTFLYEPEWRFTESKEKHRVVLEDFPTISLEFRNLAEKYQTVIADICHRMGCGMAEFLNKDVTSKQDWDKYCHYVAGLVGIGLSRLFSASEFEDPIVGEDTECANSMGLFLQKTNIIRDYLEDQQEGRQFWPQEVWGKYVKKLEDFVKPENVDVAVKCLNELITNALQHIPDVITYLSRLRNQSVFNFCAIPQVMAIATLAACYNNHQVFKGVVKIRKGQAVTLMMDATNMPAVKAIIYQYIEEIYHRVPNSDPSASKAKQLISNIRTQSLPNCQLISRSHYSPIYLSFIMLLAALSWQYLSTLSQVTEDYVQREH</sequence>
<evidence type="ECO:0000250" key="1">
    <source>
        <dbReference type="UniProtKB" id="P37268"/>
    </source>
</evidence>
<evidence type="ECO:0000255" key="2"/>
<evidence type="ECO:0000269" key="3">
    <source>
    </source>
</evidence>
<evidence type="ECO:0000269" key="4">
    <source>
    </source>
</evidence>
<evidence type="ECO:0000269" key="5">
    <source>
    </source>
</evidence>
<evidence type="ECO:0000305" key="6"/>